<evidence type="ECO:0000255" key="1">
    <source>
        <dbReference type="HAMAP-Rule" id="MF_00016"/>
    </source>
</evidence>
<evidence type="ECO:0000256" key="2">
    <source>
        <dbReference type="SAM" id="MobiDB-lite"/>
    </source>
</evidence>
<organism>
    <name type="scientific">Delftia acidovorans (strain DSM 14801 / SPH-1)</name>
    <dbReference type="NCBI Taxonomy" id="398578"/>
    <lineage>
        <taxon>Bacteria</taxon>
        <taxon>Pseudomonadati</taxon>
        <taxon>Pseudomonadota</taxon>
        <taxon>Betaproteobacteria</taxon>
        <taxon>Burkholderiales</taxon>
        <taxon>Comamonadaceae</taxon>
        <taxon>Delftia</taxon>
    </lineage>
</organism>
<protein>
    <recommendedName>
        <fullName evidence="1">Holliday junction branch migration complex subunit RuvB</fullName>
        <ecNumber evidence="1">3.6.4.-</ecNumber>
    </recommendedName>
</protein>
<comment type="function">
    <text evidence="1">The RuvA-RuvB-RuvC complex processes Holliday junction (HJ) DNA during genetic recombination and DNA repair, while the RuvA-RuvB complex plays an important role in the rescue of blocked DNA replication forks via replication fork reversal (RFR). RuvA specifically binds to HJ cruciform DNA, conferring on it an open structure. The RuvB hexamer acts as an ATP-dependent pump, pulling dsDNA into and through the RuvAB complex. RuvB forms 2 homohexamers on either side of HJ DNA bound by 1 or 2 RuvA tetramers; 4 subunits per hexamer contact DNA at a time. Coordinated motions by a converter formed by DNA-disengaged RuvB subunits stimulates ATP hydrolysis and nucleotide exchange. Immobilization of the converter enables RuvB to convert the ATP-contained energy into a lever motion, pulling 2 nucleotides of DNA out of the RuvA tetramer per ATP hydrolyzed, thus driving DNA branch migration. The RuvB motors rotate together with the DNA substrate, which together with the progressing nucleotide cycle form the mechanistic basis for DNA recombination by continuous HJ branch migration. Branch migration allows RuvC to scan DNA until it finds its consensus sequence, where it cleaves and resolves cruciform DNA.</text>
</comment>
<comment type="catalytic activity">
    <reaction evidence="1">
        <text>ATP + H2O = ADP + phosphate + H(+)</text>
        <dbReference type="Rhea" id="RHEA:13065"/>
        <dbReference type="ChEBI" id="CHEBI:15377"/>
        <dbReference type="ChEBI" id="CHEBI:15378"/>
        <dbReference type="ChEBI" id="CHEBI:30616"/>
        <dbReference type="ChEBI" id="CHEBI:43474"/>
        <dbReference type="ChEBI" id="CHEBI:456216"/>
    </reaction>
</comment>
<comment type="subunit">
    <text evidence="1">Homohexamer. Forms an RuvA(8)-RuvB(12)-Holliday junction (HJ) complex. HJ DNA is sandwiched between 2 RuvA tetramers; dsDNA enters through RuvA and exits via RuvB. An RuvB hexamer assembles on each DNA strand where it exits the tetramer. Each RuvB hexamer is contacted by two RuvA subunits (via domain III) on 2 adjacent RuvB subunits; this complex drives branch migration. In the full resolvosome a probable DNA-RuvA(4)-RuvB(12)-RuvC(2) complex forms which resolves the HJ.</text>
</comment>
<comment type="subcellular location">
    <subcellularLocation>
        <location evidence="1">Cytoplasm</location>
    </subcellularLocation>
</comment>
<comment type="domain">
    <text evidence="1">Has 3 domains, the large (RuvB-L) and small ATPase (RuvB-S) domains and the C-terminal head (RuvB-H) domain. The head domain binds DNA, while the ATPase domains jointly bind ATP, ADP or are empty depending on the state of the subunit in the translocation cycle. During a single DNA translocation step the structure of each domain remains the same, but their relative positions change.</text>
</comment>
<comment type="similarity">
    <text evidence="1">Belongs to the RuvB family.</text>
</comment>
<name>RUVB_DELAS</name>
<accession>A9BUG8</accession>
<dbReference type="EC" id="3.6.4.-" evidence="1"/>
<dbReference type="EMBL" id="CP000884">
    <property type="protein sequence ID" value="ABX33871.1"/>
    <property type="molecule type" value="Genomic_DNA"/>
</dbReference>
<dbReference type="RefSeq" id="WP_012203157.1">
    <property type="nucleotide sequence ID" value="NC_010002.1"/>
</dbReference>
<dbReference type="SMR" id="A9BUG8"/>
<dbReference type="STRING" id="398578.Daci_1227"/>
<dbReference type="GeneID" id="24116305"/>
<dbReference type="KEGG" id="dac:Daci_1227"/>
<dbReference type="eggNOG" id="COG2255">
    <property type="taxonomic scope" value="Bacteria"/>
</dbReference>
<dbReference type="HOGENOM" id="CLU_055599_1_0_4"/>
<dbReference type="Proteomes" id="UP000000784">
    <property type="component" value="Chromosome"/>
</dbReference>
<dbReference type="GO" id="GO:0005737">
    <property type="term" value="C:cytoplasm"/>
    <property type="evidence" value="ECO:0007669"/>
    <property type="project" value="UniProtKB-SubCell"/>
</dbReference>
<dbReference type="GO" id="GO:0048476">
    <property type="term" value="C:Holliday junction resolvase complex"/>
    <property type="evidence" value="ECO:0007669"/>
    <property type="project" value="UniProtKB-UniRule"/>
</dbReference>
<dbReference type="GO" id="GO:0005524">
    <property type="term" value="F:ATP binding"/>
    <property type="evidence" value="ECO:0007669"/>
    <property type="project" value="UniProtKB-UniRule"/>
</dbReference>
<dbReference type="GO" id="GO:0016887">
    <property type="term" value="F:ATP hydrolysis activity"/>
    <property type="evidence" value="ECO:0007669"/>
    <property type="project" value="InterPro"/>
</dbReference>
<dbReference type="GO" id="GO:0000400">
    <property type="term" value="F:four-way junction DNA binding"/>
    <property type="evidence" value="ECO:0007669"/>
    <property type="project" value="UniProtKB-UniRule"/>
</dbReference>
<dbReference type="GO" id="GO:0009378">
    <property type="term" value="F:four-way junction helicase activity"/>
    <property type="evidence" value="ECO:0007669"/>
    <property type="project" value="InterPro"/>
</dbReference>
<dbReference type="GO" id="GO:0006310">
    <property type="term" value="P:DNA recombination"/>
    <property type="evidence" value="ECO:0007669"/>
    <property type="project" value="UniProtKB-UniRule"/>
</dbReference>
<dbReference type="GO" id="GO:0006281">
    <property type="term" value="P:DNA repair"/>
    <property type="evidence" value="ECO:0007669"/>
    <property type="project" value="UniProtKB-UniRule"/>
</dbReference>
<dbReference type="CDD" id="cd00009">
    <property type="entry name" value="AAA"/>
    <property type="match status" value="1"/>
</dbReference>
<dbReference type="FunFam" id="1.10.10.10:FF:000086">
    <property type="entry name" value="Holliday junction ATP-dependent DNA helicase RuvB"/>
    <property type="match status" value="1"/>
</dbReference>
<dbReference type="FunFam" id="1.10.8.60:FF:000023">
    <property type="entry name" value="Holliday junction ATP-dependent DNA helicase RuvB"/>
    <property type="match status" value="1"/>
</dbReference>
<dbReference type="FunFam" id="3.40.50.300:FF:000073">
    <property type="entry name" value="Holliday junction ATP-dependent DNA helicase RuvB"/>
    <property type="match status" value="1"/>
</dbReference>
<dbReference type="Gene3D" id="1.10.8.60">
    <property type="match status" value="1"/>
</dbReference>
<dbReference type="Gene3D" id="3.40.50.300">
    <property type="entry name" value="P-loop containing nucleotide triphosphate hydrolases"/>
    <property type="match status" value="1"/>
</dbReference>
<dbReference type="Gene3D" id="1.10.10.10">
    <property type="entry name" value="Winged helix-like DNA-binding domain superfamily/Winged helix DNA-binding domain"/>
    <property type="match status" value="1"/>
</dbReference>
<dbReference type="HAMAP" id="MF_00016">
    <property type="entry name" value="DNA_HJ_migration_RuvB"/>
    <property type="match status" value="1"/>
</dbReference>
<dbReference type="InterPro" id="IPR003593">
    <property type="entry name" value="AAA+_ATPase"/>
</dbReference>
<dbReference type="InterPro" id="IPR041445">
    <property type="entry name" value="AAA_lid_4"/>
</dbReference>
<dbReference type="InterPro" id="IPR004605">
    <property type="entry name" value="DNA_helicase_Holl-junc_RuvB"/>
</dbReference>
<dbReference type="InterPro" id="IPR027417">
    <property type="entry name" value="P-loop_NTPase"/>
</dbReference>
<dbReference type="InterPro" id="IPR008824">
    <property type="entry name" value="RuvB-like_N"/>
</dbReference>
<dbReference type="InterPro" id="IPR008823">
    <property type="entry name" value="RuvB_C"/>
</dbReference>
<dbReference type="InterPro" id="IPR036388">
    <property type="entry name" value="WH-like_DNA-bd_sf"/>
</dbReference>
<dbReference type="InterPro" id="IPR036390">
    <property type="entry name" value="WH_DNA-bd_sf"/>
</dbReference>
<dbReference type="NCBIfam" id="NF000868">
    <property type="entry name" value="PRK00080.1"/>
    <property type="match status" value="1"/>
</dbReference>
<dbReference type="NCBIfam" id="TIGR00635">
    <property type="entry name" value="ruvB"/>
    <property type="match status" value="1"/>
</dbReference>
<dbReference type="PANTHER" id="PTHR42848">
    <property type="match status" value="1"/>
</dbReference>
<dbReference type="PANTHER" id="PTHR42848:SF1">
    <property type="entry name" value="HOLLIDAY JUNCTION BRANCH MIGRATION COMPLEX SUBUNIT RUVB"/>
    <property type="match status" value="1"/>
</dbReference>
<dbReference type="Pfam" id="PF17864">
    <property type="entry name" value="AAA_lid_4"/>
    <property type="match status" value="1"/>
</dbReference>
<dbReference type="Pfam" id="PF05491">
    <property type="entry name" value="RuvB_C"/>
    <property type="match status" value="1"/>
</dbReference>
<dbReference type="Pfam" id="PF05496">
    <property type="entry name" value="RuvB_N"/>
    <property type="match status" value="1"/>
</dbReference>
<dbReference type="SMART" id="SM00382">
    <property type="entry name" value="AAA"/>
    <property type="match status" value="1"/>
</dbReference>
<dbReference type="SUPFAM" id="SSF52540">
    <property type="entry name" value="P-loop containing nucleoside triphosphate hydrolases"/>
    <property type="match status" value="1"/>
</dbReference>
<dbReference type="SUPFAM" id="SSF46785">
    <property type="entry name" value="Winged helix' DNA-binding domain"/>
    <property type="match status" value="1"/>
</dbReference>
<sequence>MSIHTDDFGQGGFAQGGFPPDKAPDKLRMISAAPVSRGEEAMERALRPKLLQEYVGQAKAREQLEIFIGAARKRNEALDHVLLFGPPGLGKTTLSHIIAAELGVNLRQTSGPVLEKPKDLAALLTNLEANDVLFIDEIHRLSPVVEEILYPALEDYQIDIMIGEGPAARSIKLDLQPFTLVGATTRAGMLTNPLRDRFGIVARLEFYTAEELARIVRRSAGLLNAPIDDEGAFEIARRSRGTPRIANRLLRRVRDYADVRGDGSITRELADRALAMLDVDPQGFDIMDRKLLEAVVHRFDGGPVGLDNIAASIGEEAGTIEDVIEPYLIQQGFLQRTPRGRMATQAAYRHLGLPVPGDDAS</sequence>
<proteinExistence type="inferred from homology"/>
<feature type="chain" id="PRO_1000089639" description="Holliday junction branch migration complex subunit RuvB">
    <location>
        <begin position="1"/>
        <end position="361"/>
    </location>
</feature>
<feature type="region of interest" description="Disordered" evidence="2">
    <location>
        <begin position="1"/>
        <end position="25"/>
    </location>
</feature>
<feature type="region of interest" description="Large ATPase domain (RuvB-L)" evidence="1">
    <location>
        <begin position="5"/>
        <end position="207"/>
    </location>
</feature>
<feature type="region of interest" description="Small ATPAse domain (RuvB-S)" evidence="1">
    <location>
        <begin position="208"/>
        <end position="278"/>
    </location>
</feature>
<feature type="region of interest" description="Head domain (RuvB-H)" evidence="1">
    <location>
        <begin position="281"/>
        <end position="361"/>
    </location>
</feature>
<feature type="binding site" evidence="1">
    <location>
        <position position="46"/>
    </location>
    <ligand>
        <name>ATP</name>
        <dbReference type="ChEBI" id="CHEBI:30616"/>
    </ligand>
</feature>
<feature type="binding site" evidence="1">
    <location>
        <position position="47"/>
    </location>
    <ligand>
        <name>ATP</name>
        <dbReference type="ChEBI" id="CHEBI:30616"/>
    </ligand>
</feature>
<feature type="binding site" evidence="1">
    <location>
        <position position="88"/>
    </location>
    <ligand>
        <name>ATP</name>
        <dbReference type="ChEBI" id="CHEBI:30616"/>
    </ligand>
</feature>
<feature type="binding site" evidence="1">
    <location>
        <position position="91"/>
    </location>
    <ligand>
        <name>ATP</name>
        <dbReference type="ChEBI" id="CHEBI:30616"/>
    </ligand>
</feature>
<feature type="binding site" evidence="1">
    <location>
        <position position="92"/>
    </location>
    <ligand>
        <name>ATP</name>
        <dbReference type="ChEBI" id="CHEBI:30616"/>
    </ligand>
</feature>
<feature type="binding site" evidence="1">
    <location>
        <position position="92"/>
    </location>
    <ligand>
        <name>Mg(2+)</name>
        <dbReference type="ChEBI" id="CHEBI:18420"/>
    </ligand>
</feature>
<feature type="binding site" evidence="1">
    <location>
        <position position="93"/>
    </location>
    <ligand>
        <name>ATP</name>
        <dbReference type="ChEBI" id="CHEBI:30616"/>
    </ligand>
</feature>
<feature type="binding site" evidence="1">
    <location>
        <begin position="154"/>
        <end position="156"/>
    </location>
    <ligand>
        <name>ATP</name>
        <dbReference type="ChEBI" id="CHEBI:30616"/>
    </ligand>
</feature>
<feature type="binding site" evidence="1">
    <location>
        <position position="197"/>
    </location>
    <ligand>
        <name>ATP</name>
        <dbReference type="ChEBI" id="CHEBI:30616"/>
    </ligand>
</feature>
<feature type="binding site" evidence="1">
    <location>
        <position position="207"/>
    </location>
    <ligand>
        <name>ATP</name>
        <dbReference type="ChEBI" id="CHEBI:30616"/>
    </ligand>
</feature>
<feature type="binding site" evidence="1">
    <location>
        <position position="244"/>
    </location>
    <ligand>
        <name>ATP</name>
        <dbReference type="ChEBI" id="CHEBI:30616"/>
    </ligand>
</feature>
<feature type="binding site" evidence="1">
    <location>
        <position position="336"/>
    </location>
    <ligand>
        <name>DNA</name>
        <dbReference type="ChEBI" id="CHEBI:16991"/>
    </ligand>
</feature>
<feature type="binding site" evidence="1">
    <location>
        <position position="341"/>
    </location>
    <ligand>
        <name>DNA</name>
        <dbReference type="ChEBI" id="CHEBI:16991"/>
    </ligand>
</feature>
<reference key="1">
    <citation type="submission" date="2007-11" db="EMBL/GenBank/DDBJ databases">
        <title>Complete sequence of Delftia acidovorans DSM 14801 / SPH-1.</title>
        <authorList>
            <person name="Copeland A."/>
            <person name="Lucas S."/>
            <person name="Lapidus A."/>
            <person name="Barry K."/>
            <person name="Glavina del Rio T."/>
            <person name="Dalin E."/>
            <person name="Tice H."/>
            <person name="Pitluck S."/>
            <person name="Lowry S."/>
            <person name="Clum A."/>
            <person name="Schmutz J."/>
            <person name="Larimer F."/>
            <person name="Land M."/>
            <person name="Hauser L."/>
            <person name="Kyrpides N."/>
            <person name="Kim E."/>
            <person name="Schleheck D."/>
            <person name="Richardson P."/>
        </authorList>
    </citation>
    <scope>NUCLEOTIDE SEQUENCE [LARGE SCALE GENOMIC DNA]</scope>
    <source>
        <strain>DSM 14801 / SPH-1</strain>
    </source>
</reference>
<gene>
    <name evidence="1" type="primary">ruvB</name>
    <name type="ordered locus">Daci_1227</name>
</gene>
<keyword id="KW-0067">ATP-binding</keyword>
<keyword id="KW-0963">Cytoplasm</keyword>
<keyword id="KW-0227">DNA damage</keyword>
<keyword id="KW-0233">DNA recombination</keyword>
<keyword id="KW-0234">DNA repair</keyword>
<keyword id="KW-0238">DNA-binding</keyword>
<keyword id="KW-0378">Hydrolase</keyword>
<keyword id="KW-0547">Nucleotide-binding</keyword>
<keyword id="KW-1185">Reference proteome</keyword>